<reference key="1">
    <citation type="journal article" date="2004" name="Nat. Biotechnol.">
        <title>The genome sequence of the extreme thermophile Thermus thermophilus.</title>
        <authorList>
            <person name="Henne A."/>
            <person name="Brueggemann H."/>
            <person name="Raasch C."/>
            <person name="Wiezer A."/>
            <person name="Hartsch T."/>
            <person name="Liesegang H."/>
            <person name="Johann A."/>
            <person name="Lienard T."/>
            <person name="Gohl O."/>
            <person name="Martinez-Arias R."/>
            <person name="Jacobi C."/>
            <person name="Starkuviene V."/>
            <person name="Schlenczeck S."/>
            <person name="Dencker S."/>
            <person name="Huber R."/>
            <person name="Klenk H.-P."/>
            <person name="Kramer W."/>
            <person name="Merkl R."/>
            <person name="Gottschalk G."/>
            <person name="Fritz H.-J."/>
        </authorList>
    </citation>
    <scope>NUCLEOTIDE SEQUENCE [LARGE SCALE GENOMIC DNA]</scope>
    <source>
        <strain>ATCC BAA-163 / DSM 7039 / HB27</strain>
    </source>
</reference>
<reference key="2">
    <citation type="journal article" date="1982" name="J. Biol. Chem.">
        <title>A thermostable tRNA (guanosine-2')-methyltransferase from Thermus thermophilus HB27 and the effect of ribose methylation on the conformational stability of tRNA.</title>
        <authorList>
            <person name="Kumagai I."/>
            <person name="Watanabe K."/>
            <person name="Oshima T."/>
        </authorList>
    </citation>
    <scope>FUNCTION</scope>
    <scope>CATALYTIC ACTIVITY</scope>
    <scope>ACTIVITY REGULATION</scope>
    <scope>BIOPHYSICOCHEMICAL PROPERTIES</scope>
    <scope>SUBUNIT</scope>
    <source>
        <strain>ATCC BAA-163 / DSM 7039 / HB27</strain>
    </source>
</reference>
<comment type="function">
    <text evidence="1 2">Catalyzes the 2'-O methylation of guanosine at position 18 in tRNA.</text>
</comment>
<comment type="catalytic activity">
    <reaction evidence="1 2">
        <text>guanosine(18) in tRNA + S-adenosyl-L-methionine = 2'-O-methylguanosine(18) in tRNA + S-adenosyl-L-homocysteine + H(+)</text>
        <dbReference type="Rhea" id="RHEA:20077"/>
        <dbReference type="Rhea" id="RHEA-COMP:10190"/>
        <dbReference type="Rhea" id="RHEA-COMP:10192"/>
        <dbReference type="ChEBI" id="CHEBI:15378"/>
        <dbReference type="ChEBI" id="CHEBI:57856"/>
        <dbReference type="ChEBI" id="CHEBI:59789"/>
        <dbReference type="ChEBI" id="CHEBI:74269"/>
        <dbReference type="ChEBI" id="CHEBI:74445"/>
        <dbReference type="EC" id="2.1.1.34"/>
    </reaction>
</comment>
<comment type="activity regulation">
    <text evidence="2">Stimulated by magnesium ions and spermine. Inhibited by S-adenosyl-homocysteine.</text>
</comment>
<comment type="biophysicochemical properties">
    <kinetics>
        <KM evidence="2">0.47 uM for S-adenosyl-L-methionine</KM>
        <KM evidence="2">0.01 uM for E.coli tRNA(Phe)</KM>
        <Vmax evidence="2">1.31 nmol/min/mg enzyme</Vmax>
    </kinetics>
    <phDependence>
        <text evidence="2">Optimum pH is 7.2-7.5.</text>
    </phDependence>
</comment>
<comment type="subunit">
    <text evidence="2">Monomer.</text>
</comment>
<comment type="similarity">
    <text evidence="1 3">Belongs to the class IV-like SAM-binding methyltransferase superfamily. RNA methyltransferase TrmH family.</text>
</comment>
<sequence length="194" mass="22084">MRERTEARRRRIEEVLRRRQPDLTVLLENVHKPHNLSAILRTCDAVGVLEAHAVNPTGGVPTFNETSGGSHKWVYLRVHPDLHEAFRFLKERGFTVYATALREDARDFREVDYTKPTAVLFGAEKWGVSEEALALADGAIKIPMLGMVQSLNVSVAAAVILFEAQRQRLKAGLYDRPRLDPELYQKVLADWLRK</sequence>
<feature type="chain" id="PRO_0000436161" description="tRNA (guanosine(18)-2'-O)-methyltransferase">
    <location>
        <begin position="1"/>
        <end position="194"/>
    </location>
</feature>
<feature type="binding site" evidence="1">
    <location>
        <position position="99"/>
    </location>
    <ligand>
        <name>S-adenosyl-L-methionine</name>
        <dbReference type="ChEBI" id="CHEBI:59789"/>
    </ligand>
</feature>
<feature type="binding site" evidence="1">
    <location>
        <begin position="122"/>
        <end position="126"/>
    </location>
    <ligand>
        <name>S-adenosyl-L-methionine</name>
        <dbReference type="ChEBI" id="CHEBI:59789"/>
    </ligand>
</feature>
<feature type="binding site" evidence="1">
    <location>
        <position position="142"/>
    </location>
    <ligand>
        <name>S-adenosyl-L-methionine</name>
        <dbReference type="ChEBI" id="CHEBI:59789"/>
    </ligand>
</feature>
<feature type="binding site" evidence="1">
    <location>
        <position position="151"/>
    </location>
    <ligand>
        <name>S-adenosyl-L-methionine</name>
        <dbReference type="ChEBI" id="CHEBI:59789"/>
    </ligand>
</feature>
<gene>
    <name evidence="1" type="primary">trmH</name>
    <name evidence="4" type="ordered locus">TT_C1867</name>
</gene>
<organism>
    <name type="scientific">Thermus thermophilus (strain ATCC BAA-163 / DSM 7039 / HB27)</name>
    <dbReference type="NCBI Taxonomy" id="262724"/>
    <lineage>
        <taxon>Bacteria</taxon>
        <taxon>Thermotogati</taxon>
        <taxon>Deinococcota</taxon>
        <taxon>Deinococci</taxon>
        <taxon>Thermales</taxon>
        <taxon>Thermaceae</taxon>
        <taxon>Thermus</taxon>
    </lineage>
</organism>
<keyword id="KW-0489">Methyltransferase</keyword>
<keyword id="KW-0694">RNA-binding</keyword>
<keyword id="KW-0949">S-adenosyl-L-methionine</keyword>
<keyword id="KW-0808">Transferase</keyword>
<keyword id="KW-0819">tRNA processing</keyword>
<keyword id="KW-0820">tRNA-binding</keyword>
<accession>Q72GI1</accession>
<evidence type="ECO:0000255" key="1">
    <source>
        <dbReference type="HAMAP-Rule" id="MF_02060"/>
    </source>
</evidence>
<evidence type="ECO:0000269" key="2">
    <source>
    </source>
</evidence>
<evidence type="ECO:0000305" key="3"/>
<evidence type="ECO:0000312" key="4">
    <source>
        <dbReference type="EMBL" id="AAS82209.1"/>
    </source>
</evidence>
<protein>
    <recommendedName>
        <fullName evidence="1 3">tRNA (guanosine(18)-2'-O)-methyltransferase</fullName>
        <ecNumber evidence="1 2">2.1.1.34</ecNumber>
    </recommendedName>
    <alternativeName>
        <fullName evidence="1 3">tRNA [Gm18] methyltransferase</fullName>
    </alternativeName>
</protein>
<name>TRMH_THET2</name>
<proteinExistence type="evidence at protein level"/>
<dbReference type="EC" id="2.1.1.34" evidence="1 2"/>
<dbReference type="EMBL" id="AE017221">
    <property type="protein sequence ID" value="AAS82209.1"/>
    <property type="molecule type" value="Genomic_DNA"/>
</dbReference>
<dbReference type="RefSeq" id="WP_011174221.1">
    <property type="nucleotide sequence ID" value="NC_005835.1"/>
</dbReference>
<dbReference type="SMR" id="Q72GI1"/>
<dbReference type="GeneID" id="3168939"/>
<dbReference type="KEGG" id="tth:TT_C1867"/>
<dbReference type="eggNOG" id="COG0566">
    <property type="taxonomic scope" value="Bacteria"/>
</dbReference>
<dbReference type="HOGENOM" id="CLU_021322_4_2_0"/>
<dbReference type="OrthoDB" id="9794400at2"/>
<dbReference type="Proteomes" id="UP000000592">
    <property type="component" value="Chromosome"/>
</dbReference>
<dbReference type="GO" id="GO:0141100">
    <property type="term" value="F:tRNA (guanine(18)-2'-O)-methyltransferase activity"/>
    <property type="evidence" value="ECO:0007669"/>
    <property type="project" value="UniProtKB-UniRule"/>
</dbReference>
<dbReference type="GO" id="GO:0000049">
    <property type="term" value="F:tRNA binding"/>
    <property type="evidence" value="ECO:0007669"/>
    <property type="project" value="UniProtKB-UniRule"/>
</dbReference>
<dbReference type="GO" id="GO:0002938">
    <property type="term" value="P:tRNA guanine ribose methylation"/>
    <property type="evidence" value="ECO:0000314"/>
    <property type="project" value="UniProtKB"/>
</dbReference>
<dbReference type="CDD" id="cd18092">
    <property type="entry name" value="SpoU-like_TrmH"/>
    <property type="match status" value="1"/>
</dbReference>
<dbReference type="Gene3D" id="3.40.1280.10">
    <property type="match status" value="1"/>
</dbReference>
<dbReference type="HAMAP" id="MF_02060">
    <property type="entry name" value="tRNA_methyltr_TrmH"/>
    <property type="match status" value="1"/>
</dbReference>
<dbReference type="InterPro" id="IPR029028">
    <property type="entry name" value="Alpha/beta_knot_MTases"/>
</dbReference>
<dbReference type="InterPro" id="IPR022724">
    <property type="entry name" value="rRNA_MeTrfase_SpoU_C"/>
</dbReference>
<dbReference type="InterPro" id="IPR001537">
    <property type="entry name" value="SpoU_MeTrfase"/>
</dbReference>
<dbReference type="InterPro" id="IPR033671">
    <property type="entry name" value="TrmH"/>
</dbReference>
<dbReference type="InterPro" id="IPR029026">
    <property type="entry name" value="tRNA_m1G_MTases_N"/>
</dbReference>
<dbReference type="NCBIfam" id="NF008295">
    <property type="entry name" value="PRK11081.1"/>
    <property type="match status" value="1"/>
</dbReference>
<dbReference type="PANTHER" id="PTHR43453">
    <property type="entry name" value="RRNA METHYLASE-LIKE"/>
    <property type="match status" value="1"/>
</dbReference>
<dbReference type="PANTHER" id="PTHR43453:SF1">
    <property type="entry name" value="TRNA_RRNA METHYLTRANSFERASE SPOU TYPE DOMAIN-CONTAINING PROTEIN"/>
    <property type="match status" value="1"/>
</dbReference>
<dbReference type="Pfam" id="PF12105">
    <property type="entry name" value="SpoU_methylas_C"/>
    <property type="match status" value="1"/>
</dbReference>
<dbReference type="Pfam" id="PF00588">
    <property type="entry name" value="SpoU_methylase"/>
    <property type="match status" value="1"/>
</dbReference>
<dbReference type="SUPFAM" id="SSF75217">
    <property type="entry name" value="alpha/beta knot"/>
    <property type="match status" value="1"/>
</dbReference>